<name>RNPA_HALH5</name>
<dbReference type="EC" id="3.1.26.5" evidence="1"/>
<dbReference type="EMBL" id="AB013492">
    <property type="protein sequence ID" value="BAA82683.1"/>
    <property type="molecule type" value="Genomic_DNA"/>
</dbReference>
<dbReference type="EMBL" id="BA000004">
    <property type="protein sequence ID" value="BAB07784.1"/>
    <property type="molecule type" value="Genomic_DNA"/>
</dbReference>
<dbReference type="PIR" id="A84158">
    <property type="entry name" value="A84158"/>
</dbReference>
<dbReference type="RefSeq" id="WP_010900189.1">
    <property type="nucleotide sequence ID" value="NC_002570.2"/>
</dbReference>
<dbReference type="SMR" id="Q9RCA4"/>
<dbReference type="STRING" id="272558.gene:10729983"/>
<dbReference type="GeneID" id="87599648"/>
<dbReference type="KEGG" id="bha:BH4065"/>
<dbReference type="eggNOG" id="COG0594">
    <property type="taxonomic scope" value="Bacteria"/>
</dbReference>
<dbReference type="HOGENOM" id="CLU_117179_9_1_9"/>
<dbReference type="OrthoDB" id="9810867at2"/>
<dbReference type="Proteomes" id="UP000001258">
    <property type="component" value="Chromosome"/>
</dbReference>
<dbReference type="GO" id="GO:0030677">
    <property type="term" value="C:ribonuclease P complex"/>
    <property type="evidence" value="ECO:0007669"/>
    <property type="project" value="TreeGrafter"/>
</dbReference>
<dbReference type="GO" id="GO:0042781">
    <property type="term" value="F:3'-tRNA processing endoribonuclease activity"/>
    <property type="evidence" value="ECO:0007669"/>
    <property type="project" value="TreeGrafter"/>
</dbReference>
<dbReference type="GO" id="GO:0004526">
    <property type="term" value="F:ribonuclease P activity"/>
    <property type="evidence" value="ECO:0007669"/>
    <property type="project" value="UniProtKB-UniRule"/>
</dbReference>
<dbReference type="GO" id="GO:0000049">
    <property type="term" value="F:tRNA binding"/>
    <property type="evidence" value="ECO:0007669"/>
    <property type="project" value="UniProtKB-UniRule"/>
</dbReference>
<dbReference type="GO" id="GO:0001682">
    <property type="term" value="P:tRNA 5'-leader removal"/>
    <property type="evidence" value="ECO:0007669"/>
    <property type="project" value="UniProtKB-UniRule"/>
</dbReference>
<dbReference type="FunFam" id="3.30.230.10:FF:000021">
    <property type="entry name" value="Ribonuclease P protein component"/>
    <property type="match status" value="1"/>
</dbReference>
<dbReference type="Gene3D" id="3.30.230.10">
    <property type="match status" value="1"/>
</dbReference>
<dbReference type="HAMAP" id="MF_00227">
    <property type="entry name" value="RNase_P"/>
    <property type="match status" value="1"/>
</dbReference>
<dbReference type="InterPro" id="IPR020568">
    <property type="entry name" value="Ribosomal_Su5_D2-typ_SF"/>
</dbReference>
<dbReference type="InterPro" id="IPR014721">
    <property type="entry name" value="Ribsml_uS5_D2-typ_fold_subgr"/>
</dbReference>
<dbReference type="InterPro" id="IPR000100">
    <property type="entry name" value="RNase_P"/>
</dbReference>
<dbReference type="InterPro" id="IPR020539">
    <property type="entry name" value="RNase_P_CS"/>
</dbReference>
<dbReference type="NCBIfam" id="TIGR00188">
    <property type="entry name" value="rnpA"/>
    <property type="match status" value="1"/>
</dbReference>
<dbReference type="PANTHER" id="PTHR33992">
    <property type="entry name" value="RIBONUCLEASE P PROTEIN COMPONENT"/>
    <property type="match status" value="1"/>
</dbReference>
<dbReference type="PANTHER" id="PTHR33992:SF1">
    <property type="entry name" value="RIBONUCLEASE P PROTEIN COMPONENT"/>
    <property type="match status" value="1"/>
</dbReference>
<dbReference type="Pfam" id="PF00825">
    <property type="entry name" value="Ribonuclease_P"/>
    <property type="match status" value="1"/>
</dbReference>
<dbReference type="SUPFAM" id="SSF54211">
    <property type="entry name" value="Ribosomal protein S5 domain 2-like"/>
    <property type="match status" value="1"/>
</dbReference>
<dbReference type="PROSITE" id="PS00648">
    <property type="entry name" value="RIBONUCLEASE_P"/>
    <property type="match status" value="1"/>
</dbReference>
<evidence type="ECO:0000255" key="1">
    <source>
        <dbReference type="HAMAP-Rule" id="MF_00227"/>
    </source>
</evidence>
<sequence>MKKEHRIKRSDEFSRVFNEGFSVANRQFVIYVLPKEGQDFFRVGLSVSKKIGNAVTRNRVKRLIRTFFQEHEQAISGERDYVIIARKPAADMTYEQVKGSLWHVCKKAKIIQPKVRAHK</sequence>
<comment type="function">
    <text evidence="1">RNaseP catalyzes the removal of the 5'-leader sequence from pre-tRNA to produce the mature 5'-terminus. It can also cleave other RNA substrates such as 4.5S RNA. The protein component plays an auxiliary but essential role in vivo by binding to the 5'-leader sequence and broadening the substrate specificity of the ribozyme.</text>
</comment>
<comment type="catalytic activity">
    <reaction evidence="1">
        <text>Endonucleolytic cleavage of RNA, removing 5'-extranucleotides from tRNA precursor.</text>
        <dbReference type="EC" id="3.1.26.5"/>
    </reaction>
</comment>
<comment type="subunit">
    <text evidence="1">Consists of a catalytic RNA component (M1 or rnpB) and a protein subunit.</text>
</comment>
<comment type="similarity">
    <text evidence="1">Belongs to the RnpA family.</text>
</comment>
<protein>
    <recommendedName>
        <fullName evidence="1">Ribonuclease P protein component</fullName>
        <shortName evidence="1">RNase P protein</shortName>
        <shortName evidence="1">RNaseP protein</shortName>
        <ecNumber evidence="1">3.1.26.5</ecNumber>
    </recommendedName>
    <alternativeName>
        <fullName evidence="1">Protein C5</fullName>
    </alternativeName>
</protein>
<proteinExistence type="inferred from homology"/>
<reference key="1">
    <citation type="journal article" date="1999" name="Biosci. Biotechnol. Biochem.">
        <title>Replication origin region of the chromosome of alkaliphilic Bacillus halodurans C-125.</title>
        <authorList>
            <person name="Takami H."/>
            <person name="Masui N."/>
            <person name="Nakasone K."/>
            <person name="Horikoshi K."/>
        </authorList>
    </citation>
    <scope>NUCLEOTIDE SEQUENCE [GENOMIC DNA]</scope>
    <source>
        <strain>ATCC BAA-125 / DSM 18197 / FERM 7344 / JCM 9153 / C-125</strain>
    </source>
</reference>
<reference key="2">
    <citation type="journal article" date="2000" name="Nucleic Acids Res.">
        <title>Complete genome sequence of the alkaliphilic bacterium Bacillus halodurans and genomic sequence comparison with Bacillus subtilis.</title>
        <authorList>
            <person name="Takami H."/>
            <person name="Nakasone K."/>
            <person name="Takaki Y."/>
            <person name="Maeno G."/>
            <person name="Sasaki R."/>
            <person name="Masui N."/>
            <person name="Fuji F."/>
            <person name="Hirama C."/>
            <person name="Nakamura Y."/>
            <person name="Ogasawara N."/>
            <person name="Kuhara S."/>
            <person name="Horikoshi K."/>
        </authorList>
    </citation>
    <scope>NUCLEOTIDE SEQUENCE [LARGE SCALE GENOMIC DNA]</scope>
    <source>
        <strain>ATCC BAA-125 / DSM 18197 / FERM 7344 / JCM 9153 / C-125</strain>
    </source>
</reference>
<organism>
    <name type="scientific">Halalkalibacterium halodurans (strain ATCC BAA-125 / DSM 18197 / FERM 7344 / JCM 9153 / C-125)</name>
    <name type="common">Bacillus halodurans</name>
    <dbReference type="NCBI Taxonomy" id="272558"/>
    <lineage>
        <taxon>Bacteria</taxon>
        <taxon>Bacillati</taxon>
        <taxon>Bacillota</taxon>
        <taxon>Bacilli</taxon>
        <taxon>Bacillales</taxon>
        <taxon>Bacillaceae</taxon>
        <taxon>Halalkalibacterium (ex Joshi et al. 2022)</taxon>
    </lineage>
</organism>
<feature type="chain" id="PRO_0000198421" description="Ribonuclease P protein component">
    <location>
        <begin position="1"/>
        <end position="119"/>
    </location>
</feature>
<gene>
    <name evidence="1" type="primary">rnpA</name>
    <name type="ordered locus">BH4065</name>
</gene>
<keyword id="KW-0255">Endonuclease</keyword>
<keyword id="KW-0378">Hydrolase</keyword>
<keyword id="KW-0540">Nuclease</keyword>
<keyword id="KW-1185">Reference proteome</keyword>
<keyword id="KW-0694">RNA-binding</keyword>
<keyword id="KW-0819">tRNA processing</keyword>
<accession>Q9RCA4</accession>
<accession>Q9JPV2</accession>